<evidence type="ECO:0000250" key="1"/>
<evidence type="ECO:0000250" key="2">
    <source>
        <dbReference type="UniProtKB" id="P13621"/>
    </source>
</evidence>
<evidence type="ECO:0000250" key="3">
    <source>
        <dbReference type="UniProtKB" id="P19483"/>
    </source>
</evidence>
<evidence type="ECO:0000250" key="4">
    <source>
        <dbReference type="UniProtKB" id="P48047"/>
    </source>
</evidence>
<evidence type="ECO:0000250" key="5">
    <source>
        <dbReference type="UniProtKB" id="Q9DB20"/>
    </source>
</evidence>
<evidence type="ECO:0000305" key="6"/>
<sequence length="213" mass="23279">MATPAVSGLSRQVRCFSTSVVRPFAKLVRPPVQVYGIEGRYATALYSAASKQNKLEQVEKELLRVAQILKEPKVAAPVLNPYVKRSIKVKSLNDITAKERFSPLTTNLINLLAENGRLSNTQGVVSAFSTMMSAHRGEVPCTVTSASPLEEATLSELKTVLKSFLSQGQVLKLEAKTDPSILGGMIVRIGEKYVDMSVKTKIQKLSRAMRETA</sequence>
<feature type="transit peptide" description="Mitochondrion" evidence="1">
    <location>
        <begin position="1"/>
        <end position="23"/>
    </location>
</feature>
<feature type="chain" id="PRO_0000002648" description="ATP synthase peripheral stalk subunit OSCP, mitochondrial">
    <location>
        <begin position="24"/>
        <end position="213"/>
    </location>
</feature>
<feature type="short sequence motif" description="SIFI-degron" evidence="4">
    <location>
        <begin position="5"/>
        <end position="23"/>
    </location>
</feature>
<feature type="modified residue" description="N6-acetyllysine" evidence="5">
    <location>
        <position position="54"/>
    </location>
</feature>
<feature type="modified residue" description="N6-acetyllysine" evidence="5">
    <location>
        <position position="60"/>
    </location>
</feature>
<feature type="modified residue" description="N6-acetyllysine" evidence="5">
    <location>
        <position position="70"/>
    </location>
</feature>
<feature type="modified residue" description="N6-acetyllysine" evidence="5">
    <location>
        <position position="73"/>
    </location>
</feature>
<feature type="modified residue" description="N6-succinyllysine" evidence="5">
    <location>
        <position position="90"/>
    </location>
</feature>
<feature type="modified residue" description="N6-acetyllysine; alternate" evidence="5">
    <location>
        <position position="158"/>
    </location>
</feature>
<feature type="modified residue" description="N6-succinyllysine; alternate" evidence="5">
    <location>
        <position position="158"/>
    </location>
</feature>
<feature type="modified residue" description="N6-acetyllysine; alternate" evidence="4">
    <location>
        <position position="162"/>
    </location>
</feature>
<feature type="modified residue" description="N6-succinyllysine; alternate" evidence="5">
    <location>
        <position position="162"/>
    </location>
</feature>
<feature type="modified residue" description="N6-acetyllysine" evidence="4">
    <location>
        <position position="172"/>
    </location>
</feature>
<feature type="modified residue" description="N6-acetyllysine" evidence="5">
    <location>
        <position position="176"/>
    </location>
</feature>
<feature type="modified residue" description="N6-acetyllysine" evidence="4">
    <location>
        <position position="192"/>
    </location>
</feature>
<feature type="modified residue" description="N6-succinyllysine" evidence="5">
    <location>
        <position position="199"/>
    </location>
</feature>
<comment type="function">
    <text evidence="2 3 4">Subunit OSCP, of the mitochondrial membrane ATP synthase complex (F(1)F(0) ATP synthase or Complex V) that produces ATP from ADP in the presence of a proton gradient across the membrane which is generated by electron transport complexes of the respiratory chain. ATP synthase complex consist of a soluble F(1) head domain - the catalytic core - and a membrane F(1) domain - the membrane proton channel. These two domains are linked by a central stalk rotating inside the F(1) region and a stationary peripheral stalk. During catalysis, ATP synthesis in the catalytic domain of F(1) is coupled via a rotary mechanism of the central stalk subunits to proton translocation (By similarity). In vivo, can only synthesize ATP although its ATP hydrolase activity can be activated artificially in vitro (By similarity). Part of the complex F(0) domain (By similarity). Part of the complex F(0) domain and the peripheric stalk, which acts as a stator to hold the catalytic alpha(3)beta(3) subcomplex and subunit a/ATP6 static relative to the rotary elements (By similarity).</text>
</comment>
<comment type="subunit">
    <text evidence="4">Component of the ATP synthase complex composed at least of ATP5F1A/subunit alpha, ATP5F1B/subunit beta, ATP5MC1/subunit c (homooctomer), MT-ATP6/subunit a, MT-ATP8/subunit 8, ATP5ME/subunit e, ATP5MF/subunit f, ATP5MG/subunit g, ATP5MK/subunit k, ATP5MJ/subunit j, ATP5F1C/subunit gamma, ATP5F1D/subunit delta, ATP5F1E/subunit epsilon, ATP5PF/subunit F6, ATP5PB/subunit b, ATP5PD/subunit d, ATP5PO/subunit OSCP. ATP synthase complex consists of a soluble F(1) head domain (subunits alpha(3) and beta(3)) - the catalytic core - and a membrane F(0) domain - the membrane proton channel (subunits c, a, 8, e, f, g, k and j). These two domains are linked by a central stalk (subunits gamma, delta, and epsilon) rotating inside the F1 region and a stationary peripheral stalk (subunits F6, b, d, and OSCP).</text>
</comment>
<comment type="subcellular location">
    <subcellularLocation>
        <location evidence="1">Mitochondrion</location>
    </subcellularLocation>
    <subcellularLocation>
        <location evidence="1">Mitochondrion inner membrane</location>
    </subcellularLocation>
</comment>
<comment type="PTM">
    <text evidence="4">Acetylation at Lys-162 decreases ATP production. Deacetylated by SIRT3 (By similarity).</text>
</comment>
<comment type="PTM">
    <text evidence="4">In response to mitochondrial stress, the precursor protein is ubiquitinated by the SIFI complex in the cytoplasm before mitochondrial import, leading to its degradation. Within the SIFI complex, UBR4 initiates ubiquitin chain that are further elongated or branched by KCMF1.</text>
</comment>
<comment type="similarity">
    <text evidence="6">Belongs to the ATPase delta chain family.</text>
</comment>
<name>ATPO_PONAB</name>
<proteinExistence type="evidence at transcript level"/>
<keyword id="KW-0007">Acetylation</keyword>
<keyword id="KW-0066">ATP synthesis</keyword>
<keyword id="KW-0375">Hydrogen ion transport</keyword>
<keyword id="KW-0406">Ion transport</keyword>
<keyword id="KW-0472">Membrane</keyword>
<keyword id="KW-0496">Mitochondrion</keyword>
<keyword id="KW-0999">Mitochondrion inner membrane</keyword>
<keyword id="KW-1185">Reference proteome</keyword>
<keyword id="KW-0809">Transit peptide</keyword>
<keyword id="KW-0813">Transport</keyword>
<keyword id="KW-0832">Ubl conjugation</keyword>
<organism>
    <name type="scientific">Pongo abelii</name>
    <name type="common">Sumatran orangutan</name>
    <name type="synonym">Pongo pygmaeus abelii</name>
    <dbReference type="NCBI Taxonomy" id="9601"/>
    <lineage>
        <taxon>Eukaryota</taxon>
        <taxon>Metazoa</taxon>
        <taxon>Chordata</taxon>
        <taxon>Craniata</taxon>
        <taxon>Vertebrata</taxon>
        <taxon>Euteleostomi</taxon>
        <taxon>Mammalia</taxon>
        <taxon>Eutheria</taxon>
        <taxon>Euarchontoglires</taxon>
        <taxon>Primates</taxon>
        <taxon>Haplorrhini</taxon>
        <taxon>Catarrhini</taxon>
        <taxon>Hominidae</taxon>
        <taxon>Pongo</taxon>
    </lineage>
</organism>
<protein>
    <recommendedName>
        <fullName evidence="6">ATP synthase peripheral stalk subunit OSCP, mitochondrial</fullName>
    </recommendedName>
    <alternativeName>
        <fullName evidence="6">ATP synthase subunit O</fullName>
    </alternativeName>
    <alternativeName>
        <fullName>Oligomycin sensitivity conferral protein</fullName>
        <shortName>OSCP</shortName>
    </alternativeName>
</protein>
<dbReference type="EMBL" id="CR858095">
    <property type="protein sequence ID" value="CAH90334.1"/>
    <property type="molecule type" value="mRNA"/>
</dbReference>
<dbReference type="RefSeq" id="NP_001125158.1">
    <property type="nucleotide sequence ID" value="NM_001131686.1"/>
</dbReference>
<dbReference type="SMR" id="Q5RD23"/>
<dbReference type="FunCoup" id="Q5RD23">
    <property type="interactions" value="2235"/>
</dbReference>
<dbReference type="STRING" id="9601.ENSPPYP00000012709"/>
<dbReference type="GeneID" id="100172045"/>
<dbReference type="KEGG" id="pon:100172045"/>
<dbReference type="CTD" id="539"/>
<dbReference type="eggNOG" id="KOG1662">
    <property type="taxonomic scope" value="Eukaryota"/>
</dbReference>
<dbReference type="InParanoid" id="Q5RD23"/>
<dbReference type="OrthoDB" id="1262810at2759"/>
<dbReference type="Proteomes" id="UP000001595">
    <property type="component" value="Unplaced"/>
</dbReference>
<dbReference type="GO" id="GO:0005743">
    <property type="term" value="C:mitochondrial inner membrane"/>
    <property type="evidence" value="ECO:0007669"/>
    <property type="project" value="UniProtKB-SubCell"/>
</dbReference>
<dbReference type="GO" id="GO:0045259">
    <property type="term" value="C:proton-transporting ATP synthase complex"/>
    <property type="evidence" value="ECO:0000250"/>
    <property type="project" value="UniProtKB"/>
</dbReference>
<dbReference type="GO" id="GO:0046933">
    <property type="term" value="F:proton-transporting ATP synthase activity, rotational mechanism"/>
    <property type="evidence" value="ECO:0007669"/>
    <property type="project" value="InterPro"/>
</dbReference>
<dbReference type="FunFam" id="1.10.520.20:FF:000002">
    <property type="entry name" value="ATP synthase subunit O, mitochondrial"/>
    <property type="match status" value="1"/>
</dbReference>
<dbReference type="Gene3D" id="1.10.520.20">
    <property type="entry name" value="N-terminal domain of the delta subunit of the F1F0-ATP synthase"/>
    <property type="match status" value="1"/>
</dbReference>
<dbReference type="HAMAP" id="MF_01416">
    <property type="entry name" value="ATP_synth_delta_bact"/>
    <property type="match status" value="1"/>
</dbReference>
<dbReference type="InterPro" id="IPR026015">
    <property type="entry name" value="ATP_synth_OSCP/delta_N_sf"/>
</dbReference>
<dbReference type="InterPro" id="IPR020781">
    <property type="entry name" value="ATPase_OSCP/d_CS"/>
</dbReference>
<dbReference type="InterPro" id="IPR000711">
    <property type="entry name" value="ATPase_OSCP/dsu"/>
</dbReference>
<dbReference type="NCBIfam" id="TIGR01145">
    <property type="entry name" value="ATP_synt_delta"/>
    <property type="match status" value="1"/>
</dbReference>
<dbReference type="PANTHER" id="PTHR11910">
    <property type="entry name" value="ATP SYNTHASE DELTA CHAIN"/>
    <property type="match status" value="1"/>
</dbReference>
<dbReference type="Pfam" id="PF00213">
    <property type="entry name" value="OSCP"/>
    <property type="match status" value="1"/>
</dbReference>
<dbReference type="PRINTS" id="PR00125">
    <property type="entry name" value="ATPASEDELTA"/>
</dbReference>
<dbReference type="SUPFAM" id="SSF47928">
    <property type="entry name" value="N-terminal domain of the delta subunit of the F1F0-ATP synthase"/>
    <property type="match status" value="1"/>
</dbReference>
<dbReference type="PROSITE" id="PS00389">
    <property type="entry name" value="ATPASE_DELTA"/>
    <property type="match status" value="1"/>
</dbReference>
<gene>
    <name evidence="4" type="primary">ATP5PO</name>
    <name type="synonym">ATP5O</name>
</gene>
<reference key="1">
    <citation type="submission" date="2004-11" db="EMBL/GenBank/DDBJ databases">
        <authorList>
            <consortium name="The German cDNA consortium"/>
        </authorList>
    </citation>
    <scope>NUCLEOTIDE SEQUENCE [LARGE SCALE MRNA]</scope>
    <source>
        <tissue>Brain cortex</tissue>
    </source>
</reference>
<accession>Q5RD23</accession>